<keyword id="KW-0963">Cytoplasm</keyword>
<keyword id="KW-0251">Elongation factor</keyword>
<keyword id="KW-0342">GTP-binding</keyword>
<keyword id="KW-0378">Hydrolase</keyword>
<keyword id="KW-0460">Magnesium</keyword>
<keyword id="KW-0479">Metal-binding</keyword>
<keyword id="KW-0547">Nucleotide-binding</keyword>
<keyword id="KW-0648">Protein biosynthesis</keyword>
<accession>B7HQU2</accession>
<sequence length="395" mass="42925">MAKAKFERSKPHVNIGTIGHVDHGKTTLTAAITTVLAKAGGAEARGYDQIDAAPEERERGITISTAHVEYETETRHYAHVDCPGHADYVKNMITGAAQMDGGILVVSAADGPMPQTREHILLSRQVGVPYIVVFLNKCDMVDDEELLELVEMEVRDLLSEYGFPGDDIPVIKGSALKALQGEADWEAKIIELMAEVDAYIPTPERETDKPFLMPVEDVFSITGRGTVATGRVERGIVKVGDVVEIIGLAEENASTTVTGVEMFRKLLDQAQAGDNIGALLRGVAREDIQRGQVLAKSGSVKAHAKFKAEVFVLSKEEGGRHTPFFANYRPQFYFRTTDVTGIIQLPEGTEMVMPGDNVEMTIELIAPIAIEEGTKFSIREGGRTVGYGVVATIVE</sequence>
<feature type="chain" id="PRO_1000201382" description="Elongation factor Tu">
    <location>
        <begin position="1"/>
        <end position="395"/>
    </location>
</feature>
<feature type="domain" description="tr-type G">
    <location>
        <begin position="10"/>
        <end position="204"/>
    </location>
</feature>
<feature type="region of interest" description="G1" evidence="1">
    <location>
        <begin position="19"/>
        <end position="26"/>
    </location>
</feature>
<feature type="region of interest" description="G2" evidence="1">
    <location>
        <begin position="60"/>
        <end position="64"/>
    </location>
</feature>
<feature type="region of interest" description="G3" evidence="1">
    <location>
        <begin position="81"/>
        <end position="84"/>
    </location>
</feature>
<feature type="region of interest" description="G4" evidence="1">
    <location>
        <begin position="136"/>
        <end position="139"/>
    </location>
</feature>
<feature type="region of interest" description="G5" evidence="1">
    <location>
        <begin position="174"/>
        <end position="176"/>
    </location>
</feature>
<feature type="binding site" evidence="2">
    <location>
        <begin position="19"/>
        <end position="26"/>
    </location>
    <ligand>
        <name>GTP</name>
        <dbReference type="ChEBI" id="CHEBI:37565"/>
    </ligand>
</feature>
<feature type="binding site" evidence="2">
    <location>
        <position position="26"/>
    </location>
    <ligand>
        <name>Mg(2+)</name>
        <dbReference type="ChEBI" id="CHEBI:18420"/>
    </ligand>
</feature>
<feature type="binding site" evidence="2">
    <location>
        <begin position="81"/>
        <end position="85"/>
    </location>
    <ligand>
        <name>GTP</name>
        <dbReference type="ChEBI" id="CHEBI:37565"/>
    </ligand>
</feature>
<feature type="binding site" evidence="2">
    <location>
        <begin position="136"/>
        <end position="139"/>
    </location>
    <ligand>
        <name>GTP</name>
        <dbReference type="ChEBI" id="CHEBI:37565"/>
    </ligand>
</feature>
<proteinExistence type="inferred from homology"/>
<comment type="function">
    <text evidence="2">GTP hydrolase that promotes the GTP-dependent binding of aminoacyl-tRNA to the A-site of ribosomes during protein biosynthesis.</text>
</comment>
<comment type="catalytic activity">
    <reaction evidence="2">
        <text>GTP + H2O = GDP + phosphate + H(+)</text>
        <dbReference type="Rhea" id="RHEA:19669"/>
        <dbReference type="ChEBI" id="CHEBI:15377"/>
        <dbReference type="ChEBI" id="CHEBI:15378"/>
        <dbReference type="ChEBI" id="CHEBI:37565"/>
        <dbReference type="ChEBI" id="CHEBI:43474"/>
        <dbReference type="ChEBI" id="CHEBI:58189"/>
        <dbReference type="EC" id="3.6.5.3"/>
    </reaction>
    <physiologicalReaction direction="left-to-right" evidence="2">
        <dbReference type="Rhea" id="RHEA:19670"/>
    </physiologicalReaction>
</comment>
<comment type="subunit">
    <text evidence="2">Monomer.</text>
</comment>
<comment type="subcellular location">
    <subcellularLocation>
        <location evidence="2">Cytoplasm</location>
    </subcellularLocation>
</comment>
<comment type="similarity">
    <text evidence="2">Belongs to the TRAFAC class translation factor GTPase superfamily. Classic translation factor GTPase family. EF-Tu/EF-1A subfamily.</text>
</comment>
<evidence type="ECO:0000250" key="1"/>
<evidence type="ECO:0000255" key="2">
    <source>
        <dbReference type="HAMAP-Rule" id="MF_00118"/>
    </source>
</evidence>
<organism>
    <name type="scientific">Bacillus cereus (strain AH187)</name>
    <dbReference type="NCBI Taxonomy" id="405534"/>
    <lineage>
        <taxon>Bacteria</taxon>
        <taxon>Bacillati</taxon>
        <taxon>Bacillota</taxon>
        <taxon>Bacilli</taxon>
        <taxon>Bacillales</taxon>
        <taxon>Bacillaceae</taxon>
        <taxon>Bacillus</taxon>
        <taxon>Bacillus cereus group</taxon>
    </lineage>
</organism>
<reference key="1">
    <citation type="submission" date="2008-10" db="EMBL/GenBank/DDBJ databases">
        <title>Genome sequence of Bacillus cereus AH187.</title>
        <authorList>
            <person name="Dodson R.J."/>
            <person name="Durkin A.S."/>
            <person name="Rosovitz M.J."/>
            <person name="Rasko D.A."/>
            <person name="Kolsto A.B."/>
            <person name="Okstad O.A."/>
            <person name="Ravel J."/>
            <person name="Sutton G."/>
        </authorList>
    </citation>
    <scope>NUCLEOTIDE SEQUENCE [LARGE SCALE GENOMIC DNA]</scope>
    <source>
        <strain>AH187</strain>
    </source>
</reference>
<dbReference type="EC" id="3.6.5.3" evidence="2"/>
<dbReference type="EMBL" id="CP001177">
    <property type="protein sequence ID" value="ACJ78116.1"/>
    <property type="molecule type" value="Genomic_DNA"/>
</dbReference>
<dbReference type="SMR" id="B7HQU2"/>
<dbReference type="KEGG" id="bcr:BCAH187_A0139"/>
<dbReference type="HOGENOM" id="CLU_007265_0_1_9"/>
<dbReference type="Proteomes" id="UP000002214">
    <property type="component" value="Chromosome"/>
</dbReference>
<dbReference type="GO" id="GO:0005829">
    <property type="term" value="C:cytosol"/>
    <property type="evidence" value="ECO:0007669"/>
    <property type="project" value="TreeGrafter"/>
</dbReference>
<dbReference type="GO" id="GO:0005525">
    <property type="term" value="F:GTP binding"/>
    <property type="evidence" value="ECO:0007669"/>
    <property type="project" value="UniProtKB-UniRule"/>
</dbReference>
<dbReference type="GO" id="GO:0003924">
    <property type="term" value="F:GTPase activity"/>
    <property type="evidence" value="ECO:0007669"/>
    <property type="project" value="InterPro"/>
</dbReference>
<dbReference type="GO" id="GO:0003746">
    <property type="term" value="F:translation elongation factor activity"/>
    <property type="evidence" value="ECO:0007669"/>
    <property type="project" value="UniProtKB-UniRule"/>
</dbReference>
<dbReference type="CDD" id="cd01884">
    <property type="entry name" value="EF_Tu"/>
    <property type="match status" value="1"/>
</dbReference>
<dbReference type="CDD" id="cd03697">
    <property type="entry name" value="EFTU_II"/>
    <property type="match status" value="1"/>
</dbReference>
<dbReference type="CDD" id="cd03707">
    <property type="entry name" value="EFTU_III"/>
    <property type="match status" value="1"/>
</dbReference>
<dbReference type="FunFam" id="2.40.30.10:FF:000001">
    <property type="entry name" value="Elongation factor Tu"/>
    <property type="match status" value="1"/>
</dbReference>
<dbReference type="FunFam" id="3.40.50.300:FF:000003">
    <property type="entry name" value="Elongation factor Tu"/>
    <property type="match status" value="1"/>
</dbReference>
<dbReference type="Gene3D" id="3.40.50.300">
    <property type="entry name" value="P-loop containing nucleotide triphosphate hydrolases"/>
    <property type="match status" value="1"/>
</dbReference>
<dbReference type="Gene3D" id="2.40.30.10">
    <property type="entry name" value="Translation factors"/>
    <property type="match status" value="2"/>
</dbReference>
<dbReference type="HAMAP" id="MF_00118_B">
    <property type="entry name" value="EF_Tu_B"/>
    <property type="match status" value="1"/>
</dbReference>
<dbReference type="InterPro" id="IPR041709">
    <property type="entry name" value="EF-Tu_GTP-bd"/>
</dbReference>
<dbReference type="InterPro" id="IPR050055">
    <property type="entry name" value="EF-Tu_GTPase"/>
</dbReference>
<dbReference type="InterPro" id="IPR004161">
    <property type="entry name" value="EFTu-like_2"/>
</dbReference>
<dbReference type="InterPro" id="IPR033720">
    <property type="entry name" value="EFTU_2"/>
</dbReference>
<dbReference type="InterPro" id="IPR031157">
    <property type="entry name" value="G_TR_CS"/>
</dbReference>
<dbReference type="InterPro" id="IPR027417">
    <property type="entry name" value="P-loop_NTPase"/>
</dbReference>
<dbReference type="InterPro" id="IPR005225">
    <property type="entry name" value="Small_GTP-bd"/>
</dbReference>
<dbReference type="InterPro" id="IPR000795">
    <property type="entry name" value="T_Tr_GTP-bd_dom"/>
</dbReference>
<dbReference type="InterPro" id="IPR009000">
    <property type="entry name" value="Transl_B-barrel_sf"/>
</dbReference>
<dbReference type="InterPro" id="IPR009001">
    <property type="entry name" value="Transl_elong_EF1A/Init_IF2_C"/>
</dbReference>
<dbReference type="InterPro" id="IPR004541">
    <property type="entry name" value="Transl_elong_EFTu/EF1A_bac/org"/>
</dbReference>
<dbReference type="InterPro" id="IPR004160">
    <property type="entry name" value="Transl_elong_EFTu/EF1A_C"/>
</dbReference>
<dbReference type="NCBIfam" id="TIGR00485">
    <property type="entry name" value="EF-Tu"/>
    <property type="match status" value="1"/>
</dbReference>
<dbReference type="NCBIfam" id="NF000766">
    <property type="entry name" value="PRK00049.1"/>
    <property type="match status" value="1"/>
</dbReference>
<dbReference type="NCBIfam" id="NF009372">
    <property type="entry name" value="PRK12735.1"/>
    <property type="match status" value="1"/>
</dbReference>
<dbReference type="NCBIfam" id="NF009373">
    <property type="entry name" value="PRK12736.1"/>
    <property type="match status" value="1"/>
</dbReference>
<dbReference type="NCBIfam" id="TIGR00231">
    <property type="entry name" value="small_GTP"/>
    <property type="match status" value="1"/>
</dbReference>
<dbReference type="PANTHER" id="PTHR43721:SF22">
    <property type="entry name" value="ELONGATION FACTOR TU, MITOCHONDRIAL"/>
    <property type="match status" value="1"/>
</dbReference>
<dbReference type="PANTHER" id="PTHR43721">
    <property type="entry name" value="ELONGATION FACTOR TU-RELATED"/>
    <property type="match status" value="1"/>
</dbReference>
<dbReference type="Pfam" id="PF00009">
    <property type="entry name" value="GTP_EFTU"/>
    <property type="match status" value="1"/>
</dbReference>
<dbReference type="Pfam" id="PF03144">
    <property type="entry name" value="GTP_EFTU_D2"/>
    <property type="match status" value="1"/>
</dbReference>
<dbReference type="Pfam" id="PF03143">
    <property type="entry name" value="GTP_EFTU_D3"/>
    <property type="match status" value="1"/>
</dbReference>
<dbReference type="PRINTS" id="PR00315">
    <property type="entry name" value="ELONGATNFCT"/>
</dbReference>
<dbReference type="SUPFAM" id="SSF50465">
    <property type="entry name" value="EF-Tu/eEF-1alpha/eIF2-gamma C-terminal domain"/>
    <property type="match status" value="1"/>
</dbReference>
<dbReference type="SUPFAM" id="SSF52540">
    <property type="entry name" value="P-loop containing nucleoside triphosphate hydrolases"/>
    <property type="match status" value="1"/>
</dbReference>
<dbReference type="SUPFAM" id="SSF50447">
    <property type="entry name" value="Translation proteins"/>
    <property type="match status" value="1"/>
</dbReference>
<dbReference type="PROSITE" id="PS00301">
    <property type="entry name" value="G_TR_1"/>
    <property type="match status" value="1"/>
</dbReference>
<dbReference type="PROSITE" id="PS51722">
    <property type="entry name" value="G_TR_2"/>
    <property type="match status" value="1"/>
</dbReference>
<gene>
    <name evidence="2" type="primary">tuf</name>
    <name type="ordered locus">BCAH187_A0139</name>
</gene>
<name>EFTU_BACC7</name>
<protein>
    <recommendedName>
        <fullName evidence="2">Elongation factor Tu</fullName>
        <shortName evidence="2">EF-Tu</shortName>
        <ecNumber evidence="2">3.6.5.3</ecNumber>
    </recommendedName>
</protein>